<organism>
    <name type="scientific">Mus musculus</name>
    <name type="common">Mouse</name>
    <dbReference type="NCBI Taxonomy" id="10090"/>
    <lineage>
        <taxon>Eukaryota</taxon>
        <taxon>Metazoa</taxon>
        <taxon>Chordata</taxon>
        <taxon>Craniata</taxon>
        <taxon>Vertebrata</taxon>
        <taxon>Euteleostomi</taxon>
        <taxon>Mammalia</taxon>
        <taxon>Eutheria</taxon>
        <taxon>Euarchontoglires</taxon>
        <taxon>Glires</taxon>
        <taxon>Rodentia</taxon>
        <taxon>Myomorpha</taxon>
        <taxon>Muroidea</taxon>
        <taxon>Muridae</taxon>
        <taxon>Murinae</taxon>
        <taxon>Mus</taxon>
        <taxon>Mus</taxon>
    </lineage>
</organism>
<evidence type="ECO:0000250" key="1">
    <source>
        <dbReference type="UniProtKB" id="P09429"/>
    </source>
</evidence>
<evidence type="ECO:0000250" key="2">
    <source>
        <dbReference type="UniProtKB" id="P10103"/>
    </source>
</evidence>
<evidence type="ECO:0000250" key="3">
    <source>
        <dbReference type="UniProtKB" id="P12682"/>
    </source>
</evidence>
<evidence type="ECO:0000250" key="4">
    <source>
        <dbReference type="UniProtKB" id="P63159"/>
    </source>
</evidence>
<evidence type="ECO:0000255" key="5">
    <source>
        <dbReference type="PROSITE-ProRule" id="PRU00267"/>
    </source>
</evidence>
<evidence type="ECO:0000256" key="6">
    <source>
        <dbReference type="SAM" id="MobiDB-lite"/>
    </source>
</evidence>
<evidence type="ECO:0000269" key="7">
    <source>
    </source>
</evidence>
<evidence type="ECO:0000269" key="8">
    <source>
    </source>
</evidence>
<evidence type="ECO:0000269" key="9">
    <source>
    </source>
</evidence>
<evidence type="ECO:0000269" key="10">
    <source>
    </source>
</evidence>
<evidence type="ECO:0000269" key="11">
    <source>
    </source>
</evidence>
<evidence type="ECO:0000269" key="12">
    <source>
    </source>
</evidence>
<evidence type="ECO:0000269" key="13">
    <source>
    </source>
</evidence>
<evidence type="ECO:0000269" key="14">
    <source>
    </source>
</evidence>
<evidence type="ECO:0000269" key="15">
    <source>
    </source>
</evidence>
<evidence type="ECO:0000269" key="16">
    <source>
    </source>
</evidence>
<evidence type="ECO:0000269" key="17">
    <source>
    </source>
</evidence>
<evidence type="ECO:0000269" key="18">
    <source>
    </source>
</evidence>
<evidence type="ECO:0000269" key="19">
    <source>
    </source>
</evidence>
<evidence type="ECO:0000269" key="20">
    <source>
    </source>
</evidence>
<evidence type="ECO:0000269" key="21">
    <source>
    </source>
</evidence>
<evidence type="ECO:0000269" key="22">
    <source>
    </source>
</evidence>
<evidence type="ECO:0000269" key="23">
    <source>
    </source>
</evidence>
<evidence type="ECO:0000269" key="24">
    <source>
    </source>
</evidence>
<evidence type="ECO:0000269" key="25">
    <source>
    </source>
</evidence>
<evidence type="ECO:0000269" key="26">
    <source>
    </source>
</evidence>
<evidence type="ECO:0000269" key="27">
    <source>
    </source>
</evidence>
<evidence type="ECO:0000269" key="28">
    <source>
    </source>
</evidence>
<evidence type="ECO:0000269" key="29">
    <source>
    </source>
</evidence>
<evidence type="ECO:0000269" key="30">
    <source>
    </source>
</evidence>
<evidence type="ECO:0000269" key="31">
    <source>
    </source>
</evidence>
<evidence type="ECO:0000269" key="32">
    <source>
    </source>
</evidence>
<evidence type="ECO:0000269" key="33">
    <source>
    </source>
</evidence>
<evidence type="ECO:0000269" key="34">
    <source>
    </source>
</evidence>
<evidence type="ECO:0000269" key="35">
    <source>
    </source>
</evidence>
<evidence type="ECO:0000269" key="36">
    <source>
    </source>
</evidence>
<evidence type="ECO:0000269" key="37">
    <source>
    </source>
</evidence>
<evidence type="ECO:0000269" key="38">
    <source>
    </source>
</evidence>
<evidence type="ECO:0000269" key="39">
    <source>
    </source>
</evidence>
<evidence type="ECO:0000269" key="40">
    <source>
    </source>
</evidence>
<evidence type="ECO:0000305" key="41"/>
<evidence type="ECO:0000305" key="42">
    <source>
    </source>
</evidence>
<evidence type="ECO:0000305" key="43">
    <source>
    </source>
</evidence>
<evidence type="ECO:0000305" key="44">
    <source>
    </source>
</evidence>
<evidence type="ECO:0000305" key="45">
    <source>
    </source>
</evidence>
<evidence type="ECO:0000305" key="46">
    <source>
    </source>
</evidence>
<evidence type="ECO:0000305" key="47">
    <source>
    </source>
</evidence>
<evidence type="ECO:0000305" key="48">
    <source>
    </source>
</evidence>
<evidence type="ECO:0000305" key="49">
    <source>
    </source>
</evidence>
<evidence type="ECO:0007744" key="50">
    <source>
    </source>
</evidence>
<evidence type="ECO:0007829" key="51">
    <source>
        <dbReference type="PDB" id="5ZE0"/>
    </source>
</evidence>
<dbReference type="EMBL" id="Z11997">
    <property type="protein sequence ID" value="CAA78042.1"/>
    <property type="molecule type" value="mRNA"/>
</dbReference>
<dbReference type="EMBL" id="X80457">
    <property type="protein sequence ID" value="CAA56631.1"/>
    <property type="molecule type" value="Genomic_DNA"/>
</dbReference>
<dbReference type="EMBL" id="U00431">
    <property type="protein sequence ID" value="AAA20508.1"/>
    <property type="molecule type" value="mRNA"/>
</dbReference>
<dbReference type="EMBL" id="L38477">
    <property type="protein sequence ID" value="AAA57042.1"/>
    <property type="molecule type" value="mRNA"/>
</dbReference>
<dbReference type="EMBL" id="BC006586">
    <property type="protein sequence ID" value="AAH06586.1"/>
    <property type="molecule type" value="mRNA"/>
</dbReference>
<dbReference type="EMBL" id="BC008565">
    <property type="protein sequence ID" value="AAH08565.1"/>
    <property type="molecule type" value="mRNA"/>
</dbReference>
<dbReference type="EMBL" id="BC083067">
    <property type="protein sequence ID" value="AAH83067.1"/>
    <property type="molecule type" value="mRNA"/>
</dbReference>
<dbReference type="EMBL" id="BC085090">
    <property type="protein sequence ID" value="AAH85090.1"/>
    <property type="molecule type" value="mRNA"/>
</dbReference>
<dbReference type="CCDS" id="CCDS19883.1"/>
<dbReference type="PIR" id="I48688">
    <property type="entry name" value="I48688"/>
</dbReference>
<dbReference type="RefSeq" id="NP_001300823.1">
    <property type="nucleotide sequence ID" value="NM_001313894.1"/>
</dbReference>
<dbReference type="RefSeq" id="NP_034569.1">
    <property type="nucleotide sequence ID" value="NM_010439.4"/>
</dbReference>
<dbReference type="RefSeq" id="XP_003945388.1">
    <property type="nucleotide sequence ID" value="XM_003945339.3"/>
</dbReference>
<dbReference type="PDB" id="5ZDZ">
    <property type="method" value="X-ray"/>
    <property type="resolution" value="2.80 A"/>
    <property type="chains" value="N=1-163"/>
</dbReference>
<dbReference type="PDB" id="5ZE0">
    <property type="method" value="X-ray"/>
    <property type="resolution" value="2.75 A"/>
    <property type="chains" value="N=1-163"/>
</dbReference>
<dbReference type="PDB" id="5ZE1">
    <property type="method" value="X-ray"/>
    <property type="resolution" value="3.00 A"/>
    <property type="chains" value="N=1-163"/>
</dbReference>
<dbReference type="PDB" id="5ZE2">
    <property type="method" value="X-ray"/>
    <property type="resolution" value="3.30 A"/>
    <property type="chains" value="N=1-163"/>
</dbReference>
<dbReference type="PDBsum" id="5ZDZ"/>
<dbReference type="PDBsum" id="5ZE0"/>
<dbReference type="PDBsum" id="5ZE1"/>
<dbReference type="PDBsum" id="5ZE2"/>
<dbReference type="SMR" id="P63158"/>
<dbReference type="BioGRID" id="200322">
    <property type="interactions" value="16"/>
</dbReference>
<dbReference type="CORUM" id="P63158"/>
<dbReference type="FunCoup" id="P63158">
    <property type="interactions" value="2441"/>
</dbReference>
<dbReference type="IntAct" id="P63158">
    <property type="interactions" value="11"/>
</dbReference>
<dbReference type="MINT" id="P63158"/>
<dbReference type="STRING" id="10090.ENSMUSP00000082682"/>
<dbReference type="ChEMBL" id="CHEMBL2311237"/>
<dbReference type="GlyGen" id="P63158">
    <property type="glycosylation" value="1 site, 1 O-linked glycan (1 site)"/>
</dbReference>
<dbReference type="iPTMnet" id="P63158"/>
<dbReference type="MetOSite" id="P63158"/>
<dbReference type="PhosphoSitePlus" id="P63158"/>
<dbReference type="SwissPalm" id="P63158"/>
<dbReference type="jPOST" id="P63158"/>
<dbReference type="PaxDb" id="10090-ENSMUSP00000082682"/>
<dbReference type="PeptideAtlas" id="P63158"/>
<dbReference type="ProteomicsDB" id="273149"/>
<dbReference type="Pumba" id="P63158"/>
<dbReference type="ABCD" id="P63158">
    <property type="antibodies" value="1 sequenced antibody"/>
</dbReference>
<dbReference type="Antibodypedia" id="3132">
    <property type="antibodies" value="1692 antibodies from 47 providers"/>
</dbReference>
<dbReference type="DNASU" id="15289"/>
<dbReference type="Ensembl" id="ENSMUST00000085546.13">
    <property type="protein sequence ID" value="ENSMUSP00000082682.7"/>
    <property type="gene ID" value="ENSMUSG00000066551.13"/>
</dbReference>
<dbReference type="Ensembl" id="ENSMUST00000093196.11">
    <property type="protein sequence ID" value="ENSMUSP00000106131.2"/>
    <property type="gene ID" value="ENSMUSG00000066551.13"/>
</dbReference>
<dbReference type="Ensembl" id="ENSMUST00000110505.8">
    <property type="protein sequence ID" value="ENSMUSP00000106132.2"/>
    <property type="gene ID" value="ENSMUSG00000066551.13"/>
</dbReference>
<dbReference type="GeneID" id="15289"/>
<dbReference type="KEGG" id="mmu:15289"/>
<dbReference type="UCSC" id="uc009apb.2">
    <property type="organism name" value="mouse"/>
</dbReference>
<dbReference type="AGR" id="MGI:96113"/>
<dbReference type="CTD" id="3146"/>
<dbReference type="MGI" id="MGI:96113">
    <property type="gene designation" value="Hmgb1"/>
</dbReference>
<dbReference type="VEuPathDB" id="HostDB:ENSMUSG00000066551"/>
<dbReference type="eggNOG" id="KOG0381">
    <property type="taxonomic scope" value="Eukaryota"/>
</dbReference>
<dbReference type="GeneTree" id="ENSGT00950000183120"/>
<dbReference type="InParanoid" id="P63158"/>
<dbReference type="OMA" id="PHSANEV"/>
<dbReference type="OrthoDB" id="1919336at2759"/>
<dbReference type="PhylomeDB" id="P63158"/>
<dbReference type="TreeFam" id="TF105371"/>
<dbReference type="Reactome" id="R-MMU-140342">
    <property type="pathway name" value="Apoptosis induced DNA fragmentation"/>
</dbReference>
<dbReference type="Reactome" id="R-MMU-445989">
    <property type="pathway name" value="TAK1-dependent IKK and NF-kappa-B activation"/>
</dbReference>
<dbReference type="Reactome" id="R-MMU-5620971">
    <property type="pathway name" value="Pyroptosis"/>
</dbReference>
<dbReference type="Reactome" id="R-MMU-5686938">
    <property type="pathway name" value="Regulation of TLR by endogenous ligand"/>
</dbReference>
<dbReference type="Reactome" id="R-MMU-6798695">
    <property type="pathway name" value="Neutrophil degranulation"/>
</dbReference>
<dbReference type="Reactome" id="R-MMU-879415">
    <property type="pathway name" value="Advanced glycosylation endproduct receptor signaling"/>
</dbReference>
<dbReference type="Reactome" id="R-MMU-933542">
    <property type="pathway name" value="TRAF6 mediated NF-kB activation"/>
</dbReference>
<dbReference type="BioGRID-ORCS" id="15289">
    <property type="hits" value="26 hits in 79 CRISPR screens"/>
</dbReference>
<dbReference type="ChiTaRS" id="Hmgb1">
    <property type="organism name" value="mouse"/>
</dbReference>
<dbReference type="PRO" id="PR:P63158"/>
<dbReference type="Proteomes" id="UP000000589">
    <property type="component" value="Chromosome 5"/>
</dbReference>
<dbReference type="RNAct" id="P63158">
    <property type="molecule type" value="protein"/>
</dbReference>
<dbReference type="Bgee" id="ENSMUSG00000066551">
    <property type="expression patterns" value="Expressed in embryonic facial prominence and 114 other cell types or tissues"/>
</dbReference>
<dbReference type="ExpressionAtlas" id="P63158">
    <property type="expression patterns" value="baseline and differential"/>
</dbReference>
<dbReference type="GO" id="GO:0035868">
    <property type="term" value="C:alphav-beta3 integrin-HMGB1 complex"/>
    <property type="evidence" value="ECO:0007669"/>
    <property type="project" value="Ensembl"/>
</dbReference>
<dbReference type="GO" id="GO:0009986">
    <property type="term" value="C:cell surface"/>
    <property type="evidence" value="ECO:0007669"/>
    <property type="project" value="Ensembl"/>
</dbReference>
<dbReference type="GO" id="GO:0000793">
    <property type="term" value="C:condensed chromosome"/>
    <property type="evidence" value="ECO:0007669"/>
    <property type="project" value="Ensembl"/>
</dbReference>
<dbReference type="GO" id="GO:0005737">
    <property type="term" value="C:cytoplasm"/>
    <property type="evidence" value="ECO:0000314"/>
    <property type="project" value="MGI"/>
</dbReference>
<dbReference type="GO" id="GO:0005769">
    <property type="term" value="C:early endosome"/>
    <property type="evidence" value="ECO:0000314"/>
    <property type="project" value="UniProtKB"/>
</dbReference>
<dbReference type="GO" id="GO:0005783">
    <property type="term" value="C:endoplasmic reticulum"/>
    <property type="evidence" value="ECO:0007669"/>
    <property type="project" value="Ensembl"/>
</dbReference>
<dbReference type="GO" id="GO:0005793">
    <property type="term" value="C:endoplasmic reticulum-Golgi intermediate compartment"/>
    <property type="evidence" value="ECO:0007669"/>
    <property type="project" value="UniProtKB-SubCell"/>
</dbReference>
<dbReference type="GO" id="GO:0005576">
    <property type="term" value="C:extracellular region"/>
    <property type="evidence" value="ECO:0000304"/>
    <property type="project" value="BHF-UCL"/>
</dbReference>
<dbReference type="GO" id="GO:0005615">
    <property type="term" value="C:extracellular space"/>
    <property type="evidence" value="ECO:0000314"/>
    <property type="project" value="ARUK-UCL"/>
</dbReference>
<dbReference type="GO" id="GO:0043005">
    <property type="term" value="C:neuron projection"/>
    <property type="evidence" value="ECO:0000314"/>
    <property type="project" value="MGI"/>
</dbReference>
<dbReference type="GO" id="GO:0005634">
    <property type="term" value="C:nucleus"/>
    <property type="evidence" value="ECO:0000314"/>
    <property type="project" value="ARUK-UCL"/>
</dbReference>
<dbReference type="GO" id="GO:0017053">
    <property type="term" value="C:transcription repressor complex"/>
    <property type="evidence" value="ECO:0007669"/>
    <property type="project" value="Ensembl"/>
</dbReference>
<dbReference type="GO" id="GO:0003681">
    <property type="term" value="F:bent DNA binding"/>
    <property type="evidence" value="ECO:0000266"/>
    <property type="project" value="MGI"/>
</dbReference>
<dbReference type="GO" id="GO:0000405">
    <property type="term" value="F:bubble DNA binding"/>
    <property type="evidence" value="ECO:0000250"/>
    <property type="project" value="AgBase"/>
</dbReference>
<dbReference type="GO" id="GO:0019958">
    <property type="term" value="F:C-X-C chemokine binding"/>
    <property type="evidence" value="ECO:0007669"/>
    <property type="project" value="Ensembl"/>
</dbReference>
<dbReference type="GO" id="GO:0010858">
    <property type="term" value="F:calcium-dependent protein kinase regulator activity"/>
    <property type="evidence" value="ECO:0000314"/>
    <property type="project" value="MGI"/>
</dbReference>
<dbReference type="GO" id="GO:0000402">
    <property type="term" value="F:crossed form four-way junction DNA binding"/>
    <property type="evidence" value="ECO:0000266"/>
    <property type="project" value="MGI"/>
</dbReference>
<dbReference type="GO" id="GO:0005125">
    <property type="term" value="F:cytokine activity"/>
    <property type="evidence" value="ECO:0000314"/>
    <property type="project" value="MGI"/>
</dbReference>
<dbReference type="GO" id="GO:0003684">
    <property type="term" value="F:damaged DNA binding"/>
    <property type="evidence" value="ECO:0007669"/>
    <property type="project" value="Ensembl"/>
</dbReference>
<dbReference type="GO" id="GO:0008301">
    <property type="term" value="F:DNA binding, bending"/>
    <property type="evidence" value="ECO:0000250"/>
    <property type="project" value="AgBase"/>
</dbReference>
<dbReference type="GO" id="GO:0070182">
    <property type="term" value="F:DNA polymerase binding"/>
    <property type="evidence" value="ECO:0007669"/>
    <property type="project" value="Ensembl"/>
</dbReference>
<dbReference type="GO" id="GO:0003690">
    <property type="term" value="F:double-stranded DNA binding"/>
    <property type="evidence" value="ECO:0000314"/>
    <property type="project" value="UniProtKB"/>
</dbReference>
<dbReference type="GO" id="GO:0003725">
    <property type="term" value="F:double-stranded RNA binding"/>
    <property type="evidence" value="ECO:0000314"/>
    <property type="project" value="UniProtKB"/>
</dbReference>
<dbReference type="GO" id="GO:0000400">
    <property type="term" value="F:four-way junction DNA binding"/>
    <property type="evidence" value="ECO:0000250"/>
    <property type="project" value="AgBase"/>
</dbReference>
<dbReference type="GO" id="GO:0008201">
    <property type="term" value="F:heparin binding"/>
    <property type="evidence" value="ECO:0007669"/>
    <property type="project" value="UniProtKB-KW"/>
</dbReference>
<dbReference type="GO" id="GO:0005178">
    <property type="term" value="F:integrin binding"/>
    <property type="evidence" value="ECO:0007669"/>
    <property type="project" value="Ensembl"/>
</dbReference>
<dbReference type="GO" id="GO:0001530">
    <property type="term" value="F:lipopolysaccharide binding"/>
    <property type="evidence" value="ECO:0007669"/>
    <property type="project" value="Ensembl"/>
</dbReference>
<dbReference type="GO" id="GO:0016829">
    <property type="term" value="F:lyase activity"/>
    <property type="evidence" value="ECO:0007669"/>
    <property type="project" value="Ensembl"/>
</dbReference>
<dbReference type="GO" id="GO:0003676">
    <property type="term" value="F:nucleic acid binding"/>
    <property type="evidence" value="ECO:0000269"/>
    <property type="project" value="DisProt"/>
</dbReference>
<dbReference type="GO" id="GO:0000401">
    <property type="term" value="F:open form four-way junction DNA binding"/>
    <property type="evidence" value="ECO:0000266"/>
    <property type="project" value="MGI"/>
</dbReference>
<dbReference type="GO" id="GO:0001786">
    <property type="term" value="F:phosphatidylserine binding"/>
    <property type="evidence" value="ECO:0000304"/>
    <property type="project" value="BHF-UCL"/>
</dbReference>
<dbReference type="GO" id="GO:0030295">
    <property type="term" value="F:protein kinase activator activity"/>
    <property type="evidence" value="ECO:0000314"/>
    <property type="project" value="MGI"/>
</dbReference>
<dbReference type="GO" id="GO:0061629">
    <property type="term" value="F:RNA polymerase II-specific DNA-binding transcription factor binding"/>
    <property type="evidence" value="ECO:0007669"/>
    <property type="project" value="Ensembl"/>
</dbReference>
<dbReference type="GO" id="GO:0003727">
    <property type="term" value="F:single-stranded RNA binding"/>
    <property type="evidence" value="ECO:0000314"/>
    <property type="project" value="UniProtKB"/>
</dbReference>
<dbReference type="GO" id="GO:0097100">
    <property type="term" value="F:supercoiled DNA binding"/>
    <property type="evidence" value="ECO:0000250"/>
    <property type="project" value="AgBase"/>
</dbReference>
<dbReference type="GO" id="GO:0000976">
    <property type="term" value="F:transcription cis-regulatory region binding"/>
    <property type="evidence" value="ECO:0007669"/>
    <property type="project" value="Ensembl"/>
</dbReference>
<dbReference type="GO" id="GO:0003713">
    <property type="term" value="F:transcription coactivator activity"/>
    <property type="evidence" value="ECO:0007669"/>
    <property type="project" value="Ensembl"/>
</dbReference>
<dbReference type="GO" id="GO:0003714">
    <property type="term" value="F:transcription corepressor activity"/>
    <property type="evidence" value="ECO:0007669"/>
    <property type="project" value="Ensembl"/>
</dbReference>
<dbReference type="GO" id="GO:0002218">
    <property type="term" value="P:activation of innate immune response"/>
    <property type="evidence" value="ECO:0007669"/>
    <property type="project" value="Ensembl"/>
</dbReference>
<dbReference type="GO" id="GO:0043277">
    <property type="term" value="P:apoptotic cell clearance"/>
    <property type="evidence" value="ECO:0000250"/>
    <property type="project" value="UniProtKB"/>
</dbReference>
<dbReference type="GO" id="GO:0006914">
    <property type="term" value="P:autophagy"/>
    <property type="evidence" value="ECO:0007669"/>
    <property type="project" value="UniProtKB-KW"/>
</dbReference>
<dbReference type="GO" id="GO:0006284">
    <property type="term" value="P:base-excision repair"/>
    <property type="evidence" value="ECO:0000315"/>
    <property type="project" value="UniProtKB"/>
</dbReference>
<dbReference type="GO" id="GO:0098761">
    <property type="term" value="P:cellular response to interleukin-7"/>
    <property type="evidence" value="ECO:0000314"/>
    <property type="project" value="MGI"/>
</dbReference>
<dbReference type="GO" id="GO:0071222">
    <property type="term" value="P:cellular response to lipopolysaccharide"/>
    <property type="evidence" value="ECO:0000314"/>
    <property type="project" value="ARUK-UCL"/>
</dbReference>
<dbReference type="GO" id="GO:0006325">
    <property type="term" value="P:chromatin organization"/>
    <property type="evidence" value="ECO:0000314"/>
    <property type="project" value="UniProtKB"/>
</dbReference>
<dbReference type="GO" id="GO:0032392">
    <property type="term" value="P:DNA geometric change"/>
    <property type="evidence" value="ECO:0000250"/>
    <property type="project" value="AgBase"/>
</dbReference>
<dbReference type="GO" id="GO:0006302">
    <property type="term" value="P:double-strand break repair"/>
    <property type="evidence" value="ECO:0000250"/>
    <property type="project" value="UniProtKB"/>
</dbReference>
<dbReference type="GO" id="GO:0035767">
    <property type="term" value="P:endothelial cell chemotaxis"/>
    <property type="evidence" value="ECO:0000314"/>
    <property type="project" value="UniProtKB"/>
</dbReference>
<dbReference type="GO" id="GO:0001935">
    <property type="term" value="P:endothelial cell proliferation"/>
    <property type="evidence" value="ECO:0000314"/>
    <property type="project" value="UniProtKB"/>
</dbReference>
<dbReference type="GO" id="GO:0001654">
    <property type="term" value="P:eye development"/>
    <property type="evidence" value="ECO:0000315"/>
    <property type="project" value="MGI"/>
</dbReference>
<dbReference type="GO" id="GO:0005980">
    <property type="term" value="P:glycogen catabolic process"/>
    <property type="evidence" value="ECO:0000315"/>
    <property type="project" value="MGI"/>
</dbReference>
<dbReference type="GO" id="GO:0031507">
    <property type="term" value="P:heterochromatin formation"/>
    <property type="evidence" value="ECO:0007669"/>
    <property type="project" value="Ensembl"/>
</dbReference>
<dbReference type="GO" id="GO:0050930">
    <property type="term" value="P:induction of positive chemotaxis"/>
    <property type="evidence" value="ECO:0000266"/>
    <property type="project" value="MGI"/>
</dbReference>
<dbReference type="GO" id="GO:0006954">
    <property type="term" value="P:inflammatory response"/>
    <property type="evidence" value="ECO:0000304"/>
    <property type="project" value="BHF-UCL"/>
</dbReference>
<dbReference type="GO" id="GO:0002437">
    <property type="term" value="P:inflammatory response to antigenic stimulus"/>
    <property type="evidence" value="ECO:0007669"/>
    <property type="project" value="Ensembl"/>
</dbReference>
<dbReference type="GO" id="GO:0045087">
    <property type="term" value="P:innate immune response"/>
    <property type="evidence" value="ECO:0007669"/>
    <property type="project" value="UniProtKB-KW"/>
</dbReference>
<dbReference type="GO" id="GO:0030324">
    <property type="term" value="P:lung development"/>
    <property type="evidence" value="ECO:0000315"/>
    <property type="project" value="MGI"/>
</dbReference>
<dbReference type="GO" id="GO:0002281">
    <property type="term" value="P:macrophage activation involved in immune response"/>
    <property type="evidence" value="ECO:0000315"/>
    <property type="project" value="UniProtKB"/>
</dbReference>
<dbReference type="GO" id="GO:0030099">
    <property type="term" value="P:myeloid cell differentiation"/>
    <property type="evidence" value="ECO:0000314"/>
    <property type="project" value="MGI"/>
</dbReference>
<dbReference type="GO" id="GO:0001773">
    <property type="term" value="P:myeloid dendritic cell activation"/>
    <property type="evidence" value="ECO:0000315"/>
    <property type="project" value="UniProtKB"/>
</dbReference>
<dbReference type="GO" id="GO:0002318">
    <property type="term" value="P:myeloid progenitor cell differentiation"/>
    <property type="evidence" value="ECO:0000314"/>
    <property type="project" value="MGI"/>
</dbReference>
<dbReference type="GO" id="GO:2000426">
    <property type="term" value="P:negative regulation of apoptotic cell clearance"/>
    <property type="evidence" value="ECO:0007669"/>
    <property type="project" value="Ensembl"/>
</dbReference>
<dbReference type="GO" id="GO:0043537">
    <property type="term" value="P:negative regulation of blood vessel endothelial cell migration"/>
    <property type="evidence" value="ECO:0007669"/>
    <property type="project" value="Ensembl"/>
</dbReference>
<dbReference type="GO" id="GO:0043371">
    <property type="term" value="P:negative regulation of CD4-positive, alpha-beta T cell differentiation"/>
    <property type="evidence" value="ECO:0007669"/>
    <property type="project" value="Ensembl"/>
</dbReference>
<dbReference type="GO" id="GO:0017055">
    <property type="term" value="P:negative regulation of RNA polymerase II transcription preinitiation complex assembly"/>
    <property type="evidence" value="ECO:0007669"/>
    <property type="project" value="Ensembl"/>
</dbReference>
<dbReference type="GO" id="GO:0032689">
    <property type="term" value="P:negative regulation of type II interferon production"/>
    <property type="evidence" value="ECO:0007669"/>
    <property type="project" value="Ensembl"/>
</dbReference>
<dbReference type="GO" id="GO:0097350">
    <property type="term" value="P:neutrophil clearance"/>
    <property type="evidence" value="ECO:0000250"/>
    <property type="project" value="UniProtKB"/>
</dbReference>
<dbReference type="GO" id="GO:0002270">
    <property type="term" value="P:plasmacytoid dendritic cell activation"/>
    <property type="evidence" value="ECO:0000315"/>
    <property type="project" value="UniProtKB"/>
</dbReference>
<dbReference type="GO" id="GO:0042104">
    <property type="term" value="P:positive regulation of activated T cell proliferation"/>
    <property type="evidence" value="ECO:0007669"/>
    <property type="project" value="Ensembl"/>
</dbReference>
<dbReference type="GO" id="GO:0043065">
    <property type="term" value="P:positive regulation of apoptotic process"/>
    <property type="evidence" value="ECO:0007669"/>
    <property type="project" value="Ensembl"/>
</dbReference>
<dbReference type="GO" id="GO:0010508">
    <property type="term" value="P:positive regulation of autophagy"/>
    <property type="evidence" value="ECO:0000315"/>
    <property type="project" value="UniProtKB"/>
</dbReference>
<dbReference type="GO" id="GO:0043536">
    <property type="term" value="P:positive regulation of blood vessel endothelial cell migration"/>
    <property type="evidence" value="ECO:0007669"/>
    <property type="project" value="Ensembl"/>
</dbReference>
<dbReference type="GO" id="GO:0030335">
    <property type="term" value="P:positive regulation of cell migration"/>
    <property type="evidence" value="ECO:0000266"/>
    <property type="project" value="MGI"/>
</dbReference>
<dbReference type="GO" id="GO:2000343">
    <property type="term" value="P:positive regulation of chemokine (C-X-C motif) ligand 2 production"/>
    <property type="evidence" value="ECO:0007669"/>
    <property type="project" value="Ensembl"/>
</dbReference>
<dbReference type="GO" id="GO:0007204">
    <property type="term" value="P:positive regulation of cytosolic calcium ion concentration"/>
    <property type="evidence" value="ECO:0007669"/>
    <property type="project" value="Ensembl"/>
</dbReference>
<dbReference type="GO" id="GO:2001200">
    <property type="term" value="P:positive regulation of dendritic cell differentiation"/>
    <property type="evidence" value="ECO:0007669"/>
    <property type="project" value="Ensembl"/>
</dbReference>
<dbReference type="GO" id="GO:0070374">
    <property type="term" value="P:positive regulation of ERK1 and ERK2 cascade"/>
    <property type="evidence" value="ECO:0000314"/>
    <property type="project" value="UniProtKB"/>
</dbReference>
<dbReference type="GO" id="GO:0045819">
    <property type="term" value="P:positive regulation of glycogen catabolic process"/>
    <property type="evidence" value="ECO:0000315"/>
    <property type="project" value="MGI"/>
</dbReference>
<dbReference type="GO" id="GO:0045089">
    <property type="term" value="P:positive regulation of innate immune response"/>
    <property type="evidence" value="ECO:0000315"/>
    <property type="project" value="UniProtKB"/>
</dbReference>
<dbReference type="GO" id="GO:0032727">
    <property type="term" value="P:positive regulation of interferon-alpha production"/>
    <property type="evidence" value="ECO:0000315"/>
    <property type="project" value="UniProtKB"/>
</dbReference>
<dbReference type="GO" id="GO:0032728">
    <property type="term" value="P:positive regulation of interferon-beta production"/>
    <property type="evidence" value="ECO:0000315"/>
    <property type="project" value="UniProtKB"/>
</dbReference>
<dbReference type="GO" id="GO:0032731">
    <property type="term" value="P:positive regulation of interleukin-1 beta production"/>
    <property type="evidence" value="ECO:0000315"/>
    <property type="project" value="UniProtKB"/>
</dbReference>
<dbReference type="GO" id="GO:0032733">
    <property type="term" value="P:positive regulation of interleukin-10 production"/>
    <property type="evidence" value="ECO:0007669"/>
    <property type="project" value="Ensembl"/>
</dbReference>
<dbReference type="GO" id="GO:0032735">
    <property type="term" value="P:positive regulation of interleukin-12 production"/>
    <property type="evidence" value="ECO:0007669"/>
    <property type="project" value="Ensembl"/>
</dbReference>
<dbReference type="GO" id="GO:0032755">
    <property type="term" value="P:positive regulation of interleukin-6 production"/>
    <property type="evidence" value="ECO:0000315"/>
    <property type="project" value="UniProtKB"/>
</dbReference>
<dbReference type="GO" id="GO:0032757">
    <property type="term" value="P:positive regulation of interleukin-8 production"/>
    <property type="evidence" value="ECO:0007669"/>
    <property type="project" value="Ensembl"/>
</dbReference>
<dbReference type="GO" id="GO:0046330">
    <property type="term" value="P:positive regulation of JNK cascade"/>
    <property type="evidence" value="ECO:0007669"/>
    <property type="project" value="Ensembl"/>
</dbReference>
<dbReference type="GO" id="GO:0002053">
    <property type="term" value="P:positive regulation of mesenchymal cell proliferation"/>
    <property type="evidence" value="ECO:0000266"/>
    <property type="project" value="MGI"/>
</dbReference>
<dbReference type="GO" id="GO:0032425">
    <property type="term" value="P:positive regulation of mismatch repair"/>
    <property type="evidence" value="ECO:0007669"/>
    <property type="project" value="Ensembl"/>
</dbReference>
<dbReference type="GO" id="GO:0045931">
    <property type="term" value="P:positive regulation of mitotic cell cycle"/>
    <property type="evidence" value="ECO:0000266"/>
    <property type="project" value="MGI"/>
</dbReference>
<dbReference type="GO" id="GO:0071639">
    <property type="term" value="P:positive regulation of monocyte chemotactic protein-1 production"/>
    <property type="evidence" value="ECO:0000315"/>
    <property type="project" value="UniProtKB"/>
</dbReference>
<dbReference type="GO" id="GO:0090026">
    <property type="term" value="P:positive regulation of monocyte chemotaxis"/>
    <property type="evidence" value="ECO:0007669"/>
    <property type="project" value="Ensembl"/>
</dbReference>
<dbReference type="GO" id="GO:0045639">
    <property type="term" value="P:positive regulation of myeloid cell differentiation"/>
    <property type="evidence" value="ECO:0000314"/>
    <property type="project" value="MGI"/>
</dbReference>
<dbReference type="GO" id="GO:1905455">
    <property type="term" value="P:positive regulation of myeloid progenitor cell differentiation"/>
    <property type="evidence" value="ECO:0000314"/>
    <property type="project" value="MGI"/>
</dbReference>
<dbReference type="GO" id="GO:1901224">
    <property type="term" value="P:positive regulation of non-canonical NF-kappaB signal transduction"/>
    <property type="evidence" value="ECO:0000314"/>
    <property type="project" value="UniProtKB"/>
</dbReference>
<dbReference type="GO" id="GO:1903672">
    <property type="term" value="P:positive regulation of sprouting angiogenesis"/>
    <property type="evidence" value="ECO:0000314"/>
    <property type="project" value="UniProtKB"/>
</dbReference>
<dbReference type="GO" id="GO:0034137">
    <property type="term" value="P:positive regulation of toll-like receptor 2 signaling pathway"/>
    <property type="evidence" value="ECO:0000314"/>
    <property type="project" value="UniProtKB"/>
</dbReference>
<dbReference type="GO" id="GO:0034145">
    <property type="term" value="P:positive regulation of toll-like receptor 4 signaling pathway"/>
    <property type="evidence" value="ECO:0000314"/>
    <property type="project" value="UniProtKB"/>
</dbReference>
<dbReference type="GO" id="GO:0034165">
    <property type="term" value="P:positive regulation of toll-like receptor 9 signaling pathway"/>
    <property type="evidence" value="ECO:0000250"/>
    <property type="project" value="UniProtKB"/>
</dbReference>
<dbReference type="GO" id="GO:0045944">
    <property type="term" value="P:positive regulation of transcription by RNA polymerase II"/>
    <property type="evidence" value="ECO:0000315"/>
    <property type="project" value="MGI"/>
</dbReference>
<dbReference type="GO" id="GO:0032760">
    <property type="term" value="P:positive regulation of tumor necrosis factor production"/>
    <property type="evidence" value="ECO:0000315"/>
    <property type="project" value="UniProtKB"/>
</dbReference>
<dbReference type="GO" id="GO:1905564">
    <property type="term" value="P:positive regulation of vascular endothelial cell proliferation"/>
    <property type="evidence" value="ECO:0007669"/>
    <property type="project" value="Ensembl"/>
</dbReference>
<dbReference type="GO" id="GO:0046598">
    <property type="term" value="P:positive regulation of viral entry into host cell"/>
    <property type="evidence" value="ECO:0007669"/>
    <property type="project" value="Ensembl"/>
</dbReference>
<dbReference type="GO" id="GO:0090303">
    <property type="term" value="P:positive regulation of wound healing"/>
    <property type="evidence" value="ECO:0000314"/>
    <property type="project" value="UniProtKB"/>
</dbReference>
<dbReference type="GO" id="GO:2000819">
    <property type="term" value="P:regulation of nucleotide-excision repair"/>
    <property type="evidence" value="ECO:0000315"/>
    <property type="project" value="UniProtKB"/>
</dbReference>
<dbReference type="GO" id="GO:0002840">
    <property type="term" value="P:regulation of T cell mediated immune response to tumor cell"/>
    <property type="evidence" value="ECO:0000314"/>
    <property type="project" value="UniProtKB"/>
</dbReference>
<dbReference type="GO" id="GO:0002643">
    <property type="term" value="P:regulation of tolerance induction"/>
    <property type="evidence" value="ECO:0000315"/>
    <property type="project" value="UniProtKB"/>
</dbReference>
<dbReference type="GO" id="GO:0051384">
    <property type="term" value="P:response to glucocorticoid"/>
    <property type="evidence" value="ECO:0000315"/>
    <property type="project" value="MGI"/>
</dbReference>
<dbReference type="GO" id="GO:0035711">
    <property type="term" value="P:T-helper 1 cell activation"/>
    <property type="evidence" value="ECO:0007669"/>
    <property type="project" value="Ensembl"/>
</dbReference>
<dbReference type="GO" id="GO:0045063">
    <property type="term" value="P:T-helper 1 cell differentiation"/>
    <property type="evidence" value="ECO:0007669"/>
    <property type="project" value="Ensembl"/>
</dbReference>
<dbReference type="GO" id="GO:0006366">
    <property type="term" value="P:transcription by RNA polymerase II"/>
    <property type="evidence" value="ECO:0000315"/>
    <property type="project" value="MGI"/>
</dbReference>
<dbReference type="GO" id="GO:0033151">
    <property type="term" value="P:V(D)J recombination"/>
    <property type="evidence" value="ECO:0007669"/>
    <property type="project" value="Ensembl"/>
</dbReference>
<dbReference type="CDD" id="cd21978">
    <property type="entry name" value="HMG-box_HMGB_rpt1"/>
    <property type="match status" value="1"/>
</dbReference>
<dbReference type="CDD" id="cd21979">
    <property type="entry name" value="HMG-box_HMGB_rpt2"/>
    <property type="match status" value="1"/>
</dbReference>
<dbReference type="DisProt" id="DP00384"/>
<dbReference type="FunFam" id="1.10.30.10:FF:000006">
    <property type="entry name" value="High mobility group protein B1"/>
    <property type="match status" value="1"/>
</dbReference>
<dbReference type="FunFam" id="1.10.30.10:FF:000015">
    <property type="entry name" value="high mobility group protein B1"/>
    <property type="match status" value="1"/>
</dbReference>
<dbReference type="Gene3D" id="1.10.30.10">
    <property type="entry name" value="High mobility group box domain"/>
    <property type="match status" value="2"/>
</dbReference>
<dbReference type="InterPro" id="IPR009071">
    <property type="entry name" value="HMG_box_dom"/>
</dbReference>
<dbReference type="InterPro" id="IPR036910">
    <property type="entry name" value="HMG_box_dom_sf"/>
</dbReference>
<dbReference type="InterPro" id="IPR017967">
    <property type="entry name" value="HMG_boxA_CS"/>
</dbReference>
<dbReference type="InterPro" id="IPR050342">
    <property type="entry name" value="HMGB"/>
</dbReference>
<dbReference type="PANTHER" id="PTHR48112:SF35">
    <property type="entry name" value="HIGH MOBILITY GROUP PROTEIN B1"/>
    <property type="match status" value="1"/>
</dbReference>
<dbReference type="PANTHER" id="PTHR48112">
    <property type="entry name" value="HIGH MOBILITY GROUP PROTEIN DSP1"/>
    <property type="match status" value="1"/>
</dbReference>
<dbReference type="Pfam" id="PF00505">
    <property type="entry name" value="HMG_box"/>
    <property type="match status" value="1"/>
</dbReference>
<dbReference type="Pfam" id="PF09011">
    <property type="entry name" value="HMG_box_2"/>
    <property type="match status" value="1"/>
</dbReference>
<dbReference type="PRINTS" id="PR00886">
    <property type="entry name" value="HIGHMOBLTY12"/>
</dbReference>
<dbReference type="SMART" id="SM00398">
    <property type="entry name" value="HMG"/>
    <property type="match status" value="2"/>
</dbReference>
<dbReference type="SUPFAM" id="SSF47095">
    <property type="entry name" value="HMG-box"/>
    <property type="match status" value="2"/>
</dbReference>
<dbReference type="PROSITE" id="PS00353">
    <property type="entry name" value="HMG_BOX_1"/>
    <property type="match status" value="1"/>
</dbReference>
<dbReference type="PROSITE" id="PS50118">
    <property type="entry name" value="HMG_BOX_2"/>
    <property type="match status" value="2"/>
</dbReference>
<name>HMGB1_MOUSE</name>
<comment type="function">
    <text evidence="1 2 3 4 12 45 46 47 48">Multifunctional redox sensitive protein with various roles in different cellular compartments. In the nucleus is one of the major chromatin-associated non-histone proteins and acts as a DNA chaperone involved in replication, transcription, chromatin remodeling, V(D)J recombination, DNA repair and genome stability. Proposed to be an universal biosensor for nucleic acids. Promotes host inflammatory response to sterile and infectious signals and is involved in the coordination and integration of innate and adaptive immune responses. In the cytoplasm functions as a sensor and/or chaperone for immunogenic nucleic acids implicating the activation of TLR9-mediated immune responses, and mediates autophagy. Acts as a danger associated molecular pattern (DAMP) molecule that amplifies immune responses during tissue injury. Released to the extracellular environment can bind DNA, nucleosomes, IL-1 beta, CXCL12, AGER isoform 2/sRAGE, lipopolysaccharide (LPS) and lipoteichoic acid (LTA), and activates cells through engagement of multiple surface receptors. In the extracellular compartment fully reduced HMGB1 (released by necrosis) acts as a chemokine, disulfide HMGB1 (actively secreted) as a cytokine, and sulfonyl HMGB1 (released from apoptotic cells) promotes immunological tolerance (PubMed:23446148, PubMed:23519706, PubMed:23994764, PubMed:25048472). Has proangiogenic activity (PubMed:16365390). May be involved in platelet activation. Binds to phosphatidylserine and phosphatidylethanolamide. Bound to RAGE mediates signaling for neuronal outgrowth. May play a role in accumulation of expanded polyglutamine (polyQ) proteins (By similarity).</text>
</comment>
<comment type="function">
    <text evidence="1 2 4 10 17 18 27 31 35">Nuclear functions are attributed to fully reduced HGMB1. Associates with chromatin and binds DNA with a preference to non-canonical DNA structures such as single-stranded DNA, DNA-containing cruciforms or bent structures, supercoiled DNA and ZDNA. Can bent DNA and enhance DNA flexibility by looping thus providing a mechanism to promote activities on various gene promoters by enhancing transcription factor binding and/or bringing distant regulatory sequences into close proximity. May be involved in nucleotide excision repair (NER), mismatch repair (MMR) and base excision repair (BER) pathways, and double strand break repair such as non-homologous end joining (NHEJ) (PubMed:17803946, PubMed:18650382). Involved in V(D)J recombination by acting as a cofactor of the RAG complex: acts by stimulating cleavage and RAG protein binding at the 23 bp spacer of conserved recombination signal sequences (RSS). In vitro can displace histone H1 from highly bent DNA. Can restructure the canonical nucleosome leading to relaxation of structural constraints for transcription factor-binding (By similarity). Enhances binding of sterol regulatory element-binding proteins (SREBPs) such as SREBF1 to their cognate DNA sequences and increases their transcriptional activities (PubMed:16040616). Facilitates binding of TP53 to DNA (By similarity). Proposed to be involved in mitochondrial quality control and autophagy in a transcription-dependent fashion implicating HSPB1; however, this function has been questioned (PubMed:21641551, PubMed:24606906). Can modulate the activity of the telomerase complex and may be involved in telomere maintenance (PubMed:22544226).</text>
</comment>
<comment type="function">
    <text evidence="1 15 23 25 34 37">In the cytoplasm proposed to dissociate the BECN1:BCL2 complex via competitive interaction with BECN1 leading to autophagy activation (PubMed:21395369). Can protect BECN1 and ATG5 from calpain-mediated cleavage and thus proposed to control their proautophagic and proapoptotic functions and to regulate the extent and severity of inflammation-associated cellular injury (PubMed:25642769). In myeloid cells has a protective role against endotoxemia and bacterial infection by promoting autophagy (PubMed:24302768). Involved in endosomal translocation and activation of TLR9 in response to CpG-DNA in macrophages (PubMed:17548579).</text>
</comment>
<comment type="function">
    <text evidence="1 2 4 9 14 16 19 20 26 29 30 33 38 43">In the extracellular compartment (following either active secretion or passive release) involved in regulation of the inflammatory response. Fully reduced HGMB1 (which subsequently gets oxidized after release) in association with CXCL12 mediates the recruitment of inflammatory cells during the initial phase of tissue injury; the CXCL12:HMGB1 complex triggers CXCR4 homodimerization (PubMed:22370717). Induces the migration of monocyte-derived immature dendritic cells and seems to regulate adhesive and migratory functions of neutrophils implicating AGER/RAGE and ITGAM (PubMed:17268551). Can bind to various types of DNA and RNA including microbial unmethylated CpG-DNA to enhance the innate immune response to nucleic acids. Proposed to act in promiscuous DNA/RNA sensing which cooperates with subsequent discriminative sensing by specific pattern recognition receptors (PubMed:19890330). Promotes extracellular DNA-induced AIM2 inflammasome activation implicating AGER/RAGE. Disulfide HMGB1 binds to transmembrane receptors, such as AGER/RAGE, TLR2, TLR4 and probably TREM1, thus activating their signal transduction pathways (PubMed:17568691, PubMed:19264983, PubMed:21419643). Mediates the release of cytokines/chemokines such as TNF, IL-1, IL-6, IL-8, CCL2, CCL3, CCL4 and CXCL10 (PubMed:12110890, PubMed:17548579). Promotes secretion of interferon-gamma by macrophage-stimulated natural killer (NK) cells in concert with other cytokines like IL-2 or IL-12. TLR4 is proposed to be the primary receptor promoting macrophage activation and signaling through TLR4 seems to implicate LY96/MD-2. In bacterial LPS- or LTA-mediated inflammatory responses binds to the endotoxins and transfers them to CD14 for signaling to the respective TLR4:LY96 and TLR2 complexes (By similarity). Contributes to tumor proliferation by association with ACER/RAGE (By similarity). Can bind to IL1-beta and signals through the IL1R1:IL1RAP receptor complex (By similarity). Binding to class A CpG activates cytokine production in plasmacytoid dendritic cells implicating TLR9, MYD88 and AGER/RAGE and can activate autoreactive B cells. Via HMGB1-containing chromatin immune complexes may also promote B cell responses to endogenous TLR9 ligands through a B-cell receptor (BCR)-dependent and ACER/RAGE-independent mechanism (By similarity). Inhibits phagocytosis of apoptotic cells by macrophages; the function is dependent on poly-ADP-ribosylation and involves binding to phosphatidylserine on the cell surface of apoptotic cells (PubMed:18768881, PubMed:22204001). In adaptive immunity may be involved in enhancing immunity through activation of effector T-cells and suppression of regulatory T (TReg) cells (PubMed:21419643). In contrast, without implicating effector or regulatory T-cells, required for tumor infiltration and activation of T-cells expressing the lymphotoxin LTA:LTB heterotrimer thus promoting tumor malignant progression (PubMed:23108142). Also reported to limit proliferation of T-cells (By similarity). Released HMGB1:nucleosome complexes formed during apoptosis can signal through TLR2 to induce cytokine production (By similarity). Involved in induction of immunological tolerance by apoptotic cells; its pro-inflammatory activities when released by apoptotic cells are neutralized by reactive oxygen species (ROS)-dependent oxidation specifically on Cys-106 (By similarity). During macrophage activation by activated lymphocyte-derived self apoptotic DNA (ALD-DNA) promotes recruitment of ALD-DNA to endosomes (PubMed:25660970).</text>
</comment>
<comment type="subunit">
    <text evidence="1 2 4 10 11 13 15 17 20 23 30 31 32 40">Interacts (fully reduced HMGB1) with CXCL12; probably in a 1:2 ratio involving two molecules of CXCL12, each interacting with one HMG box of HMGB1; inhibited by glycyrrhizin (PubMed:22370717). Associates with the TLR4:LY96 receptor complex (By similarity). Component of the RAG complex composed of core components RAG1 and RAG2, and associated component HMGB1 or HMGB2 (PubMed:9184213). Interacts (in cytoplasm upon starvation) with BECN1; inhibits the interaction of BECN1 and BCL2 leading to promotion of autophagy (PubMed:20819940). Interacts with KPNA1; involved in nuclear import (PubMed:17114460). Interacts with SREBF1, TLR2, TLR4, TLR9, APEX1, FEN1, POLB, TERT (PubMed:16040616, PubMed:16267105, PubMed:17548579, PubMed:17803946, PubMed:22544226). Interacts with AGER, PTPRZ1, IL1B, MSH2, XPA, XPC, HNF1A, TP53 (By similarity). Interacts with CD24; the probable CD24:SIGLEC10 complex is proposed to inhibit HGMB1-mediated tissue damage immune response (PubMed:19264983). Interacts with THBD; prevents HGMB1 interaction with ACER/RAGE and inhibits HGMB1 pro-inflammatory activity (By similarity). Interacts with HAVCR2; impairs HMGB1 binding to B-DNA and likely HMGB1-mediated innate immune response (PubMed:22842346). Interacts with XPO1; mediating nuclear export (By similarity). Interacts with receptor RAGE/AGER (By similarity).</text>
</comment>
<comment type="interaction">
    <interactant intactId="EBI-6665811">
        <id>P63158</id>
    </interactant>
    <interactant intactId="EBI-643716">
        <id>O88597</id>
        <label>Becn1</label>
    </interactant>
    <organismsDiffer>false</organismsDiffer>
    <experiments>3</experiments>
</comment>
<comment type="interaction">
    <interactant intactId="EBI-6665811">
        <id>P63158</id>
    </interactant>
    <interactant intactId="EBI-6665112">
        <id>Q8VIM0</id>
        <label>Havcr2</label>
    </interactant>
    <organismsDiffer>false</organismsDiffer>
    <experiments>4</experiments>
</comment>
<comment type="interaction">
    <interactant intactId="EBI-6665811">
        <id>P63158</id>
    </interactant>
    <interactant intactId="EBI-475687">
        <id>Q01860</id>
        <label>POU5F1</label>
    </interactant>
    <organismsDiffer>true</organismsDiffer>
    <experiments>3</experiments>
</comment>
<comment type="subcellular location">
    <subcellularLocation>
        <location evidence="13 23">Nucleus</location>
    </subcellularLocation>
    <subcellularLocation>
        <location evidence="13 23">Cytoplasm</location>
    </subcellularLocation>
    <subcellularLocation>
        <location evidence="9">Chromosome</location>
    </subcellularLocation>
    <subcellularLocation>
        <location evidence="36">Cell membrane</location>
        <topology evidence="36">Peripheral membrane protein</topology>
        <orientation evidence="36">Extracellular side</orientation>
    </subcellularLocation>
    <subcellularLocation>
        <location evidence="21">Endosome</location>
    </subcellularLocation>
    <subcellularLocation>
        <location evidence="42">Endoplasmic reticulum-Golgi intermediate compartment</location>
    </subcellularLocation>
    <subcellularLocation>
        <location evidence="24">Secreted</location>
    </subcellularLocation>
    <text evidence="1 9 13 15 21 22 23 24 28 36 38">In basal state predominantly nuclear. Shuttles between the cytoplasm and the nucleus (PubMed:17114460). Translocates from the nucleus to the cytoplasm upon autophagy stimulation (PubMed:20819940). Release from macrophages in the extracellular milieu requires the activation of NLRC4 or NLRP3 inflammasomes (PubMed:20802146). Passively released to the extracellular milieu from necrotic cells by diffusion, involving the fully reduced form which subsequently gets oxidized (PubMed:12110890). Also released from apoptotic cells (PubMed:25660970). Actively secreted from a variety of immune and non-immune cells such as macrophages, monocytes, neutrophils, dendritic cells and natural killer cells in response to various stimuli, involving a nonconventional secretory process via secretory lysosomes (PubMed:17548579). Secreted by plasma cells in response to LPS (PubMed:21319304). Associated with the plasma membrane of filipodia in process-growing cells, and also deposited into the substrate-attached material (By similarity). Colocalizes with RIGI on endosomal membranes (PubMed:19890330).</text>
</comment>
<comment type="tissue specificity">
    <text evidence="39">Serum levels are found elevated in mice with modeled systemic lupus erythematosus (SLE) and are correlated with SLE disease activity (PubMed:26078984).</text>
</comment>
<comment type="domain">
    <text evidence="1">HMG box 2 mediates pro-inflammatory cytokine-stimulating activity and binding to TLR4. However, not involved in mediating immunogenic activity in the context of apoptosis-induced immune tolerance.</text>
</comment>
<comment type="domain">
    <text evidence="1 4">The acidic C-terminal domain forms a flexible structure which can reversibly interact intramolecularily with the HMG boxes and modulate binding to DNA and other proteins.</text>
</comment>
<comment type="PTM">
    <text evidence="2 4">Acetylated on multiple sites upon stimulation with LPS (By similarity). Acetylation on lysine residues in the nuclear localization signals (NLS 1 and NLS 2) leads to cytoplasmic localization and subsequent secretion. Acetylation on Lys-3 results in preferential binding to DNA ends and impairs DNA bending activity (By similarity).</text>
</comment>
<comment type="PTM">
    <text evidence="1 13">Phosphorylated at serine residues (PubMed:17114460). Phosphorylation in both NLS regions is required for cytoplasmic translocation followed by secretion (By similarity).</text>
</comment>
<comment type="PTM">
    <text evidence="4">Reduction/oxidation of cysteine residues Cys-23, Cys-45 and Cys-106 and a possible intramolecular disulfide bond involving Cys-23 and Cys-45 give rise to different redox forms with specific functional activities in various cellular compartments: 1- Fully reduced HGMB1 (HMGB1C23hC45hC106h), 2- Disulfide HMGB1 (HMGB1C23-C45C106h) and 3- Sulfonyl HMGB1 (HMGB1C23soC45soC106so).</text>
</comment>
<comment type="PTM">
    <text evidence="19 29">Poly-ADP-ribosylated by PARP1 when secreted following stimulation with LPS (PubMed:18768881, PubMed:22204001).</text>
</comment>
<comment type="PTM">
    <text evidence="1 2">In vitro cleavage by CASP1 is liberating a HMG box 1-containing peptide which may mediate immunogenic activity; the peptide antagonizes apoptosis-induced immune tolerance (By similarity). Can be proteolytically cleaved by a thrombin:thrombomodulin complex; reduces binding to heparin and pro-inflammatory activities.</text>
</comment>
<comment type="PTM">
    <text evidence="1">Forms covalent cross-links mediated by transglutaminase TGM2, between a glutamine and the epsilon-amino group of a lysine residue, forming homopolymers and heteropolymers.</text>
</comment>
<comment type="disruption phenotype">
    <text evidence="7">Rapid death within 24 hours following birth due to hypoglycaemia.</text>
</comment>
<comment type="miscellaneous">
    <text evidence="8 39">Plays a role in acute sepsis; administration of antibodies to HMGB1 attenuates endotoxin lethality; administration of HMGB1 itself is lethal (PubMed:10398600). Overexpression in ALD-DNA-immunized mice significantly enhances the severity of modeled SLE (PubMed:26078984).</text>
</comment>
<comment type="similarity">
    <text evidence="41">Belongs to the HMGB family.</text>
</comment>
<comment type="caution">
    <text evidence="44 49">Was reported that reduction/oxidation of cysteine residues Cys-23, Cys-45 and Cys-106 and a possible intramolecular disulfide bond involving Cys-23 and Cys-45 give rise to different redox forms with specific functional activities. Was reported to be secreted. However, this work was later retracted, although the roles of different redox forms in some functional activities is supported by similarity.</text>
</comment>
<accession>P63158</accession>
<accession>P07155</accession>
<accession>P27109</accession>
<accession>P27428</accession>
<sequence length="215" mass="24894">MGKGDPKKPRGKMSSYAFFVQTCREEHKKKHPDASVNFSEFSKKCSERWKTMSAKEKGKFEDMAKADKARYEREMKTYIPPKGETKKKFKDPNAPKRPPSAFFLFCSEYRPKIKGEHPGLSIGDVAKKLGEMWNNTAADDKQPYEKKAAKLKEKYEKDIAAYRAKGKPDAAKKGVVKAEKSKKKKEEEDDEEDEEDEEEEEEEEDEDEEEDDDDE</sequence>
<protein>
    <recommendedName>
        <fullName>High mobility group protein B1</fullName>
    </recommendedName>
    <alternativeName>
        <fullName>High mobility group protein 1</fullName>
        <shortName>HMG-1</shortName>
    </alternativeName>
</protein>
<proteinExistence type="evidence at protein level"/>
<reference key="1">
    <citation type="journal article" date="1992" name="Nucleic Acids Res.">
        <title>Nucleotide sequence of a mouse cDNA encoding the nonhistone chromosomal high mobility group protein-1 (HMG1).</title>
        <authorList>
            <person name="Yotov W.V."/>
            <person name="St Arnaud R."/>
        </authorList>
    </citation>
    <scope>NUCLEOTIDE SEQUENCE [MRNA]</scope>
    <source>
        <strain>C3H/He</strain>
    </source>
</reference>
<reference key="2">
    <citation type="journal article" date="1994" name="J. Biol. Chem.">
        <title>The mouse gene coding for high mobility group 1 protein (HMG1).</title>
        <authorList>
            <person name="Ferrari S."/>
            <person name="Ronfani L."/>
            <person name="Calogero S."/>
            <person name="Bianchi M."/>
        </authorList>
    </citation>
    <scope>NUCLEOTIDE SEQUENCE [GENOMIC DNA]</scope>
    <source>
        <strain>129/Sv</strain>
        <tissue>Liver</tissue>
    </source>
</reference>
<reference key="3">
    <citation type="journal article" date="1994" name="Mamm. Genome">
        <title>Molecular cloning, expression analysis, and chromosomal localization of mouse Hmg1-containing sequences.</title>
        <authorList>
            <person name="Pauken C.M."/>
            <person name="Nagle D.L."/>
            <person name="Bucan M."/>
            <person name="Lo C.W."/>
        </authorList>
    </citation>
    <scope>NUCLEOTIDE SEQUENCE [MRNA]</scope>
</reference>
<reference key="4">
    <citation type="journal article" date="1996" name="Mol. Immunol.">
        <title>The conserved lymphokine element-0 in the IL5 promoter binds to a high mobility group-1 protein.</title>
        <authorList>
            <person name="Marrugo J."/>
            <person name="Marsh D.G."/>
            <person name="Ghosh B."/>
        </authorList>
    </citation>
    <scope>NUCLEOTIDE SEQUENCE [MRNA]</scope>
    <source>
        <strain>AKR/J</strain>
    </source>
</reference>
<reference key="5">
    <citation type="journal article" date="2004" name="Genome Res.">
        <title>The status, quality, and expansion of the NIH full-length cDNA project: the Mammalian Gene Collection (MGC).</title>
        <authorList>
            <consortium name="The MGC Project Team"/>
        </authorList>
    </citation>
    <scope>NUCLEOTIDE SEQUENCE [LARGE SCALE MRNA]</scope>
</reference>
<reference key="6">
    <citation type="submission" date="2007-04" db="UniProtKB">
        <authorList>
            <person name="Lubec G."/>
            <person name="Kang S.U."/>
        </authorList>
    </citation>
    <scope>PROTEIN SEQUENCE OF 31-43 AND 113-127</scope>
    <scope>IDENTIFICATION BY MASS SPECTROMETRY</scope>
    <source>
        <strain>C57BL/6J</strain>
        <tissue>Brain</tissue>
    </source>
</reference>
<reference key="7">
    <citation type="journal article" date="1988" name="J. Cell Biol.">
        <title>The adhesive and neurite-promoting molecule p30: analysis of the amino-terminal sequence and production of antipeptide antibodies that detect p30 at the surface of neuroblastoma cells and of brain neurons.</title>
        <authorList>
            <person name="Rauvala H."/>
            <person name="Merenmies J."/>
            <person name="Pihlaskari R."/>
            <person name="Korkolainen M."/>
            <person name="Huhtala M.L."/>
            <person name="Panula P."/>
        </authorList>
    </citation>
    <scope>SUBCELLULAR LOCATION</scope>
</reference>
<reference key="8">
    <citation type="journal article" date="1997" name="EMBO J.">
        <title>Stimulation of V(D)J cleavage by high mobility group proteins.</title>
        <authorList>
            <person name="van Gent D.C."/>
            <person name="Hiom K."/>
            <person name="Paull T.T."/>
            <person name="Gellert M."/>
        </authorList>
    </citation>
    <scope>FUNCTION</scope>
    <scope>IDENTIFICATION IN THE RAG COMPLEX</scope>
</reference>
<reference key="9">
    <citation type="journal article" date="1999" name="Nat. Genet.">
        <title>The lack of chromosomal protein Hmg1 does not disrupt cell growth but causes lethal hypoglycaemia in newborn mice.</title>
        <authorList>
            <person name="Calogero S."/>
            <person name="Grassi F."/>
            <person name="Aguzzi A."/>
            <person name="Voigtlaender T."/>
            <person name="Ferrier P."/>
            <person name="Ferrari S."/>
            <person name="Bianchi M.E."/>
        </authorList>
    </citation>
    <scope>DISRUPTION PHENOTYPE</scope>
</reference>
<reference key="10">
    <citation type="journal article" date="1999" name="Science">
        <title>HMG-1 as a late mediator of endotoxin lethality in mice.</title>
        <authorList>
            <person name="Wang H."/>
            <person name="Bloom O."/>
            <person name="Zhang M."/>
            <person name="Vishnubhakat J.M."/>
            <person name="Ombrellino M."/>
            <person name="Che J."/>
            <person name="Frazier A."/>
            <person name="Yang H."/>
            <person name="Ivanova S."/>
            <person name="Borovikova L."/>
            <person name="Manogue K.R."/>
            <person name="Faist E."/>
            <person name="Abraham E."/>
            <person name="Andersson J."/>
            <person name="Andersson U."/>
            <person name="Molina P.E."/>
            <person name="Abumrad N.N."/>
            <person name="Sama A."/>
            <person name="Tracey K.J."/>
        </authorList>
    </citation>
    <scope>INVOLVEMENT IN SEPSIS</scope>
</reference>
<reference key="11">
    <citation type="journal article" date="2002" name="Nature">
        <title>Release of chromatin protein HMGB1 by necrotic cells triggers inflammation.</title>
        <authorList>
            <person name="Scaffidi P."/>
            <person name="Misteli T."/>
            <person name="Bianchi M.E."/>
        </authorList>
    </citation>
    <scope>FUNCTION</scope>
    <scope>SUBCELLULAR LOCATION</scope>
</reference>
<reference key="12">
    <citation type="journal article" date="2005" name="J. Biol. Chem.">
        <title>High mobility group protein-B1 interacts with sterol regulatory element-binding proteins to enhance their DNA binding.</title>
        <authorList>
            <person name="Najima Y."/>
            <person name="Yahagi N."/>
            <person name="Takeuchi Y."/>
            <person name="Matsuzaka T."/>
            <person name="Sekiya M."/>
            <person name="Nakagawa Y."/>
            <person name="Amemiya-Kudo M."/>
            <person name="Okazaki H."/>
            <person name="Okazaki S."/>
            <person name="Tamura Y."/>
            <person name="Iizuka Y."/>
            <person name="Ohashi K."/>
            <person name="Harada K."/>
            <person name="Gotoda T."/>
            <person name="Nagai R."/>
            <person name="Kadowaki T."/>
            <person name="Ishibashi S."/>
            <person name="Yamada N."/>
            <person name="Osuga J."/>
            <person name="Shimano H."/>
        </authorList>
    </citation>
    <scope>FUNCTION</scope>
    <scope>INTERACTION WITH SREBF1</scope>
</reference>
<reference key="13">
    <citation type="journal article" date="2006" name="Am. J. Physiol.">
        <title>High mobility group box 1 protein interacts with multiple Toll-like receptors.</title>
        <authorList>
            <person name="Park J.S."/>
            <person name="Gamboni-Robertson F."/>
            <person name="He Q."/>
            <person name="Svetkauskaite D."/>
            <person name="Kim J.Y."/>
            <person name="Strassheim D."/>
            <person name="Sohn J.W."/>
            <person name="Yamada S."/>
            <person name="Maruyama I."/>
            <person name="Banerjee A."/>
            <person name="Ishizaka A."/>
            <person name="Abraham E."/>
        </authorList>
    </citation>
    <scope>INTERACTION WITH TLR2 AND TLR4</scope>
</reference>
<reference key="14">
    <citation type="journal article" date="2006" name="J. Immunol.">
        <title>Extracellular high mobility group box-1 protein is a proangiogenic cytokine.</title>
        <authorList>
            <person name="Mitola S."/>
            <person name="Belleri M."/>
            <person name="Urbinati C."/>
            <person name="Coltrini D."/>
            <person name="Sparatore B."/>
            <person name="Pedrazzi M."/>
            <person name="Melloni E."/>
            <person name="Presta M."/>
        </authorList>
    </citation>
    <scope>FUNCTION</scope>
</reference>
<reference key="15">
    <citation type="journal article" date="2006" name="J. Immunol.">
        <title>Nucleocytoplasmic shuttling of HMGB1 is regulated by phosphorylation that redirects it toward secretion.</title>
        <authorList>
            <person name="Youn J.H."/>
            <person name="Shin J.S."/>
        </authorList>
    </citation>
    <scope>PHOSPHORYLATION</scope>
    <scope>SUBCELLULAR LOCATION</scope>
    <scope>INTERACTION WITH KPNA1</scope>
</reference>
<reference key="16">
    <citation type="journal article" date="2007" name="Blood">
        <title>A novel role for HMGB1 in TLR9-mediated inflammatory responses to CpG-DNA.</title>
        <authorList>
            <person name="Ivanov S."/>
            <person name="Dragoi A.M."/>
            <person name="Wang X."/>
            <person name="Dallacosta C."/>
            <person name="Louten J."/>
            <person name="Musco G."/>
            <person name="Sitia G."/>
            <person name="Yap G.S."/>
            <person name="Wan Y."/>
            <person name="Biron C.A."/>
            <person name="Bianchi M.E."/>
            <person name="Wang H."/>
            <person name="Chu W.M."/>
        </authorList>
    </citation>
    <scope>FUNCTION</scope>
    <scope>SUBCELLULAR LOCATION</scope>
    <scope>INTERACTION WITH TLR9</scope>
</reference>
<reference key="17">
    <citation type="journal article" date="2007" name="EMBO J.">
        <title>A novel pathway of HMGB1-mediated inflammatory cell recruitment that requires Mac-1-integrin.</title>
        <authorList>
            <person name="Orlova V.V."/>
            <person name="Choi E.Y."/>
            <person name="Xie C."/>
            <person name="Chavakis E."/>
            <person name="Bierhaus A."/>
            <person name="Ihanus E."/>
            <person name="Ballantyne C.M."/>
            <person name="Gahmberg C.G."/>
            <person name="Bianchi M.E."/>
            <person name="Nawroth P.P."/>
            <person name="Chavakis T."/>
        </authorList>
    </citation>
    <scope>FUNCTION</scope>
</reference>
<reference key="18">
    <citation type="journal article" date="2007" name="Immunol. Lett.">
        <title>Endogenous signals released from necrotic cells augment inflammatory responses to bacterial endotoxin.</title>
        <authorList>
            <person name="El Mezayen R."/>
            <person name="El Gazzar M."/>
            <person name="Seeds M.C."/>
            <person name="McCall C.E."/>
            <person name="Dreskin S.C."/>
            <person name="Nicolls M.R."/>
        </authorList>
    </citation>
    <scope>FUNCTION</scope>
</reference>
<reference key="19">
    <citation type="journal article" date="2007" name="Mol. Cell">
        <title>HMGB1 is a cofactor in mammalian base excision repair.</title>
        <authorList>
            <person name="Prasad R."/>
            <person name="Liu Y."/>
            <person name="Deterding L.J."/>
            <person name="Poltoratsky V.P."/>
            <person name="Kedar P.S."/>
            <person name="Horton J.K."/>
            <person name="Kanno S."/>
            <person name="Asagoshi K."/>
            <person name="Hou E.W."/>
            <person name="Khodyreva S.N."/>
            <person name="Lavrik O.I."/>
            <person name="Tomer K.B."/>
            <person name="Yasui A."/>
            <person name="Wilson S.H."/>
        </authorList>
    </citation>
    <scope>FUNCTION</scope>
    <scope>INTERACTION WITH APEX1; FEN1 AND POLB</scope>
</reference>
<reference key="20">
    <citation type="journal article" date="2008" name="J. Immunol.">
        <title>High mobility group protein-1 inhibits phagocytosis of apoptotic neutrophils through binding to phosphatidylserine.</title>
        <authorList>
            <person name="Liu G."/>
            <person name="Wang J."/>
            <person name="Park Y.J."/>
            <person name="Tsuruta Y."/>
            <person name="Lorne E.F."/>
            <person name="Zhao X."/>
            <person name="Abraham E."/>
        </authorList>
    </citation>
    <scope>FUNCTION</scope>
    <scope>POLY-ADP-RIBOSYLATION</scope>
    <scope>PHOSPHATIDYLSERINE-BINDING</scope>
</reference>
<reference key="21">
    <citation type="journal article" date="2008" name="Proc. Natl. Acad. Sci. U.S.A.">
        <title>High mobility group protein B1 enhances DNA repair and chromatin modification after DNA damage.</title>
        <authorList>
            <person name="Lange S.S."/>
            <person name="Mitchell D.L."/>
            <person name="Vasquez K.M."/>
        </authorList>
    </citation>
    <scope>FUNCTION</scope>
</reference>
<reference key="22">
    <citation type="journal article" date="2009" name="Nature">
        <title>HMGB proteins function as universal sentinels for nucleic-acid-mediated innate immune responses.</title>
        <authorList>
            <person name="Yanai H."/>
            <person name="Ban T."/>
            <person name="Wang Z."/>
            <person name="Choi M.K."/>
            <person name="Kawamura T."/>
            <person name="Negishi H."/>
            <person name="Nakasato M."/>
            <person name="Lu Y."/>
            <person name="Hangai S."/>
            <person name="Koshiba R."/>
            <person name="Savitsky D."/>
            <person name="Ronfani L."/>
            <person name="Akira S."/>
            <person name="Bianchi M.E."/>
            <person name="Honda K."/>
            <person name="Tamura T."/>
            <person name="Kodama T."/>
            <person name="Taniguchi T."/>
        </authorList>
    </citation>
    <scope>FUNCTION</scope>
    <scope>SUBCELLULAR LOCATION</scope>
</reference>
<reference key="23">
    <citation type="journal article" date="2009" name="Science">
        <title>CD24 and Siglec-10 selectively repress tissue damage-induced immune responses.</title>
        <authorList>
            <person name="Chen G.Y."/>
            <person name="Tang J."/>
            <person name="Zheng P."/>
            <person name="Liu Y."/>
        </authorList>
    </citation>
    <scope>FUNCTION</scope>
    <scope>INTERACTION WITH CD24</scope>
</reference>
<reference key="24">
    <citation type="journal article" date="2010" name="Cell">
        <title>A tissue-specific atlas of mouse protein phosphorylation and expression.</title>
        <authorList>
            <person name="Huttlin E.L."/>
            <person name="Jedrychowski M.P."/>
            <person name="Elias J.E."/>
            <person name="Goswami T."/>
            <person name="Rad R."/>
            <person name="Beausoleil S.A."/>
            <person name="Villen J."/>
            <person name="Haas W."/>
            <person name="Sowa M.E."/>
            <person name="Gygi S.P."/>
        </authorList>
    </citation>
    <scope>IDENTIFICATION BY MASS SPECTROMETRY [LARGE SCALE ANALYSIS]</scope>
    <source>
        <tissue>Brain</tissue>
        <tissue>Brown adipose tissue</tissue>
        <tissue>Heart</tissue>
        <tissue>Kidney</tissue>
        <tissue>Liver</tissue>
        <tissue>Lung</tissue>
        <tissue>Pancreas</tissue>
        <tissue>Spleen</tissue>
        <tissue>Testis</tissue>
    </source>
</reference>
<reference key="25">
    <citation type="journal article" date="2010" name="J. Cell Biol.">
        <title>Endogenous HMGB1 regulates autophagy.</title>
        <authorList>
            <person name="Tang D."/>
            <person name="Kang R."/>
            <person name="Livesey K.M."/>
            <person name="Cheh C.W."/>
            <person name="Farkas A."/>
            <person name="Loughran P."/>
            <person name="Hoppe G."/>
            <person name="Bianchi M.E."/>
            <person name="Tracey K.J."/>
            <person name="Zeh H.J. III"/>
            <person name="Lotze M.T."/>
        </authorList>
    </citation>
    <scope>FUNCTION</scope>
    <scope>SUBCELLULAR LOCATION</scope>
    <scope>INTERACTION WITH BECN1</scope>
</reference>
<reference key="26">
    <citation type="journal article" date="2010" name="J. Immunol.">
        <title>Inflammasome-dependent release of the alarmin HMGB1 in endotoxemia.</title>
        <authorList>
            <person name="Lamkanfi M."/>
            <person name="Sarkar A."/>
            <person name="Vande Walle L."/>
            <person name="Vitari A.C."/>
            <person name="Amer A.O."/>
            <person name="Wewers M.D."/>
            <person name="Tracey K.J."/>
            <person name="Kanneganti T.D."/>
            <person name="Dixit V.M."/>
        </authorList>
    </citation>
    <scope>ROLE OF NRLC4 AND NLRP3 INFLAMMASOMES IN HMGB1 RELEASE</scope>
    <scope>SUBCELLULAR LOCATION</scope>
</reference>
<reference key="27">
    <citation type="journal article" date="2011" name="Antioxid. Redox Signal.">
        <title>High mobility group box 1 (HMGB1) activates an autophagic response to oxidative stress.</title>
        <authorList>
            <person name="Tang D."/>
            <person name="Kang R."/>
            <person name="Livesey K.M."/>
            <person name="Zeh H.J."/>
            <person name="Lotze M.T."/>
        </authorList>
    </citation>
    <scope>FUNCTION</scope>
</reference>
<reference key="28">
    <citation type="journal article" date="2011" name="Cell Metab.">
        <title>High-mobility group box 1 is essential for mitochondrial quality control.</title>
        <authorList>
            <person name="Tang D."/>
            <person name="Kang R."/>
            <person name="Livesey K.M."/>
            <person name="Kroemer G."/>
            <person name="Billiar T.R."/>
            <person name="Van Houten B."/>
            <person name="Zeh H.J."/>
            <person name="Lotze M.T."/>
        </authorList>
    </citation>
    <scope>FUNCTION</scope>
</reference>
<reference key="29">
    <citation type="journal article" date="2011" name="Cytokine">
        <title>High mobility group box-1 protein regulate immunosuppression of regulatory T cells through toll-like receptor 4.</title>
        <authorList>
            <person name="Zhu X.M."/>
            <person name="Yao Y.M."/>
            <person name="Liang H.P."/>
            <person name="Xu C.T."/>
            <person name="Dong N."/>
            <person name="Yu Y."/>
            <person name="Sheng Z.Y."/>
        </authorList>
    </citation>
    <scope>FUNCTION</scope>
</reference>
<reference key="30">
    <citation type="journal article" date="2011" name="Proteomics">
        <title>Proteome profiling suggests a pro-inflammatory role for plasma cells through release of high-mobility group box 1 protein.</title>
        <authorList>
            <person name="Vettermann C."/>
            <person name="Castor D."/>
            <person name="Mekker A."/>
            <person name="Gerrits B."/>
            <person name="Karas M."/>
            <person name="Jack H.M."/>
        </authorList>
    </citation>
    <scope>SUBCELLULAR LOCATION</scope>
</reference>
<reference key="31">
    <citation type="journal article" date="2012" name="Chromosoma">
        <title>HMGB1 gene knockout in mouse embryonic fibroblasts results in reduced telomerase activity and telomere dysfunction.</title>
        <authorList>
            <person name="Polanska E."/>
            <person name="Dobsakova Z."/>
            <person name="Dvorackova M."/>
            <person name="Fajkus J."/>
            <person name="Stros M."/>
        </authorList>
    </citation>
    <scope>FUNCTION</scope>
    <scope>INTERACTION WITH TERT</scope>
</reference>
<reference key="32">
    <citation type="journal article" date="2012" name="J. Exp. Med.">
        <title>HMGB1 promotes recruitment of inflammatory cells to damaged tissues by forming a complex with CXCL12 and signaling via CXCR4.</title>
        <authorList>
            <person name="Schiraldi M."/>
            <person name="Raucci A."/>
            <person name="Munoz L.M."/>
            <person name="Livoti E."/>
            <person name="Celona B."/>
            <person name="Venereau E."/>
            <person name="Apuzzo T."/>
            <person name="De Marchis F."/>
            <person name="Pedotti M."/>
            <person name="Bachi A."/>
            <person name="Thelen M."/>
            <person name="Varani L."/>
            <person name="Mellado M."/>
            <person name="Proudfoot A."/>
            <person name="Bianchi M.E."/>
            <person name="Uguccioni M."/>
        </authorList>
    </citation>
    <scope>FUNCTION</scope>
    <scope>INTERACTION WITH CXCL12</scope>
</reference>
<reference key="33">
    <citation type="journal article" date="2012" name="Mol. Med.">
        <title>Redox modification of cysteine residues regulates the cytokine activity of high mobility group box-1 (HMGB1).</title>
        <authorList>
            <person name="Yang H."/>
            <person name="Lundback P."/>
            <person name="Ottosson L."/>
            <person name="Erlandsson-Harris H."/>
            <person name="Venereau E."/>
            <person name="Bianchi M.E."/>
            <person name="Al-Abed Y."/>
            <person name="Andersson U."/>
            <person name="Tracey K.J."/>
            <person name="Antoine D.J."/>
        </authorList>
    </citation>
    <scope>RETRACTED PAPER</scope>
</reference>
<reference key="34">
    <citation type="journal article" date="2020" name="Mol. Med.">
        <title>Retraction Note to: Redox modification of cysteine residues regulates the cytokine activity of high mobility group box-1 (HMGB1).</title>
        <authorList>
            <person name="Yang H."/>
            <person name="Lundbaeck P."/>
            <person name="Ottosson L."/>
            <person name="Erlandsson-Harris H."/>
            <person name="Venereau E."/>
            <person name="Bianchi M.E."/>
            <person name="Al-Abed Y."/>
            <person name="Andersson U."/>
            <person name="Tracey K.J."/>
            <person name="Antoine D.J."/>
        </authorList>
    </citation>
    <scope>RETRACTION NOTICE OF PUBMED:22105604</scope>
</reference>
<reference key="35">
    <citation type="journal article" date="2012" name="Mol. Med.">
        <title>Poly(ADP-ribosyl)ation of high mobility group box 1 (HMGB1) protein enhances inhibition of efferocytosis.</title>
        <authorList>
            <person name="Davis K."/>
            <person name="Banerjee S."/>
            <person name="Friggeri A."/>
            <person name="Bell C."/>
            <person name="Abraham E."/>
            <person name="Zerfaoui M."/>
        </authorList>
    </citation>
    <scope>FUNCTION</scope>
    <scope>POLY-ADP-RIBOSYLATION</scope>
</reference>
<reference key="36">
    <citation type="journal article" date="2012" name="Nat. Immunol.">
        <title>Tumor-infiltrating DCs suppress nucleic acid-mediated innate immune responses through interactions between the receptor TIM-3 and the alarmin HMGB1.</title>
        <authorList>
            <person name="Chiba S."/>
            <person name="Baghdadi M."/>
            <person name="Akiba H."/>
            <person name="Yoshiyama H."/>
            <person name="Kinoshita I."/>
            <person name="Dosaka-Akita H."/>
            <person name="Fujioka Y."/>
            <person name="Ohba Y."/>
            <person name="Gorman J.V."/>
            <person name="Colgan J.D."/>
            <person name="Hirashima M."/>
            <person name="Uede T."/>
            <person name="Takaoka A."/>
            <person name="Yagita H."/>
            <person name="Jinushi M."/>
        </authorList>
    </citation>
    <scope>INTERACTION WITH HAVCR2</scope>
</reference>
<reference key="37">
    <citation type="journal article" date="2013" name="Cancer Res.">
        <title>Tissue damage-associated 'danger signals' influence T-cell responses that promote the progression of preneoplasia to cancer.</title>
        <authorList>
            <person name="He Y."/>
            <person name="Zha J."/>
            <person name="Wang Y."/>
            <person name="Liu W."/>
            <person name="Yang X."/>
            <person name="Yu P."/>
        </authorList>
    </citation>
    <scope>FUNCTION</scope>
</reference>
<reference key="38">
    <citation type="journal article" date="2013" name="Front. Immunol.">
        <title>HMGB1: The central cytokine for all lymphoid cells.</title>
        <authorList>
            <person name="Li G."/>
            <person name="Liang X."/>
            <person name="Lotze M.T."/>
        </authorList>
    </citation>
    <scope>REVIEW ON FUNCTION RELATED TO ADAPTIVE IMMUNITY</scope>
</reference>
<reference key="39">
    <citation type="journal article" date="2013" name="J. Leukoc. Biol.">
        <title>The many faces of HMGB1: molecular structure-functional activity in inflammation, apoptosis, and chemotaxis.</title>
        <authorList>
            <person name="Yang H."/>
            <person name="Antoine D.J."/>
            <person name="Andersson U."/>
            <person name="Tracey K.J."/>
        </authorList>
    </citation>
    <scope>REVIEW ON FUNCTION RELATED TO INFLAMMATION</scope>
</reference>
<reference key="40">
    <citation type="journal article" date="2013" name="Mol. Cell">
        <title>SIRT5-mediated lysine desuccinylation impacts diverse metabolic pathways.</title>
        <authorList>
            <person name="Park J."/>
            <person name="Chen Y."/>
            <person name="Tishkoff D.X."/>
            <person name="Peng C."/>
            <person name="Tan M."/>
            <person name="Dai L."/>
            <person name="Xie Z."/>
            <person name="Zhang Y."/>
            <person name="Zwaans B.M."/>
            <person name="Skinner M.E."/>
            <person name="Lombard D.B."/>
            <person name="Zhao Y."/>
        </authorList>
    </citation>
    <scope>ACETYLATION [LARGE SCALE ANALYSIS] AT LYS-30; LYS-43; LYS-90 AND LYS-141</scope>
    <scope>IDENTIFICATION BY MASS SPECTROMETRY [LARGE SCALE ANALYSIS]</scope>
    <source>
        <tissue>Embryonic fibroblast</tissue>
    </source>
</reference>
<reference key="41">
    <citation type="journal article" date="2013" name="Proc. Natl. Acad. Sci. U.S.A.">
        <title>Conditional ablation of HMGB1 in mice reveals its protective function against endotoxemia and bacterial infection.</title>
        <authorList>
            <person name="Yanai H."/>
            <person name="Matsuda A."/>
            <person name="An J."/>
            <person name="Koshiba R."/>
            <person name="Nishio J."/>
            <person name="Negishi H."/>
            <person name="Ikushima H."/>
            <person name="Onoe T."/>
            <person name="Ohdan H."/>
            <person name="Yoshida N."/>
            <person name="Taniguchi T."/>
        </authorList>
    </citation>
    <scope>FUNCTION</scope>
</reference>
<reference key="42">
    <citation type="journal article" date="2013" name="Semin. Cancer Biol.">
        <title>Menage a Trois in stress: DAMPs, redox and autophagy.</title>
        <authorList>
            <person name="Li G."/>
            <person name="Tang D."/>
            <person name="Lotze M.T."/>
        </authorList>
    </citation>
    <scope>REVIEW</scope>
</reference>
<reference key="43">
    <citation type="journal article" date="2014" name="Cell Metab.">
        <title>High-mobility group box 1 is dispensable for autophagy, mitochondrial quality control, and organ function in vivo.</title>
        <authorList>
            <person name="Huebener P."/>
            <person name="Gwak G.Y."/>
            <person name="Pradere J.P."/>
            <person name="Quinzii C.M."/>
            <person name="Friedman R."/>
            <person name="Lin C.S."/>
            <person name="Trent C.M."/>
            <person name="Mederacke I."/>
            <person name="Zhao E."/>
            <person name="Dapito D.H."/>
            <person name="Lin Y."/>
            <person name="Goldberg I.J."/>
            <person name="Czaja M.J."/>
            <person name="Schwabe R.F."/>
        </authorList>
    </citation>
    <scope>FUNCTION</scope>
</reference>
<reference key="44">
    <citation type="journal article" date="2014" name="Yonsei Med. J.">
        <title>The role of high mobility group box 1 in innate immunity.</title>
        <authorList>
            <person name="Lee S.A."/>
            <person name="Kwak M.S."/>
            <person name="Kim S."/>
            <person name="Shin J.S."/>
        </authorList>
    </citation>
    <scope>REVIEW ON FUNCTION RELATED TO INNATE IMMUNITY</scope>
</reference>
<reference key="45">
    <citation type="journal article" date="2015" name="J. Clin. Invest.">
        <title>Cytosolic HMGB1 controls the cellular autophagy/apoptosis checkpoint during inflammation.</title>
        <authorList>
            <person name="Zhu X."/>
            <person name="Messer J.S."/>
            <person name="Wang Y."/>
            <person name="Lin F."/>
            <person name="Cham C.M."/>
            <person name="Chang J."/>
            <person name="Billiar T.R."/>
            <person name="Lotze M.T."/>
            <person name="Boone D.L."/>
            <person name="Chang E.B."/>
        </authorList>
    </citation>
    <scope>FUNCTION</scope>
</reference>
<reference key="46">
    <citation type="journal article" date="2015" name="J. Immunol. Res.">
        <title>HMGB1 promotes systemic lupus erythematosus by enhancing macrophage inflammatory response.</title>
        <authorList>
            <person name="Lu M."/>
            <person name="Yu S."/>
            <person name="Xu W."/>
            <person name="Gao B."/>
            <person name="Xiong S."/>
        </authorList>
    </citation>
    <scope>TISSUE SPECIFICITY</scope>
    <scope>INVOLVEMENT IN AUTOIMMUNE DISEASE</scope>
</reference>
<reference key="47">
    <citation type="journal article" date="2015" name="Mol. Immunol.">
        <title>Extracellular, but not intracellular HMGB1, facilitates self-DNA induced macrophage activation via promoting DNA accumulation in endosomes and contributes to the pathogenesis of lupus nephritis.</title>
        <authorList>
            <person name="Li X."/>
            <person name="Yue Y."/>
            <person name="Zhu Y."/>
            <person name="Xiong S."/>
        </authorList>
    </citation>
    <scope>FUNCTION</scope>
    <scope>SUBCELLULAR LOCATION</scope>
</reference>
<gene>
    <name type="primary">Hmgb1</name>
    <name type="synonym">Hmg-1</name>
    <name type="synonym">Hmg1</name>
</gene>
<keyword id="KW-0002">3D-structure</keyword>
<keyword id="KW-0007">Acetylation</keyword>
<keyword id="KW-1064">Adaptive immunity</keyword>
<keyword id="KW-0013">ADP-ribosylation</keyword>
<keyword id="KW-0072">Autophagy</keyword>
<keyword id="KW-1003">Cell membrane</keyword>
<keyword id="KW-0145">Chemotaxis</keyword>
<keyword id="KW-0158">Chromosome</keyword>
<keyword id="KW-0963">Cytoplasm</keyword>
<keyword id="KW-0903">Direct protein sequencing</keyword>
<keyword id="KW-1015">Disulfide bond</keyword>
<keyword id="KW-0227">DNA damage</keyword>
<keyword id="KW-0233">DNA recombination</keyword>
<keyword id="KW-0234">DNA repair</keyword>
<keyword id="KW-0238">DNA-binding</keyword>
<keyword id="KW-0967">Endosome</keyword>
<keyword id="KW-0358">Heparin-binding</keyword>
<keyword id="KW-0391">Immunity</keyword>
<keyword id="KW-0395">Inflammatory response</keyword>
<keyword id="KW-0399">Innate immunity</keyword>
<keyword id="KW-1017">Isopeptide bond</keyword>
<keyword id="KW-0472">Membrane</keyword>
<keyword id="KW-0539">Nucleus</keyword>
<keyword id="KW-0558">Oxidation</keyword>
<keyword id="KW-0597">Phosphoprotein</keyword>
<keyword id="KW-1185">Reference proteome</keyword>
<keyword id="KW-0677">Repeat</keyword>
<keyword id="KW-0964">Secreted</keyword>
<feature type="chain" id="PRO_0000048528" description="High mobility group protein B1">
    <location>
        <begin position="1"/>
        <end position="215"/>
    </location>
</feature>
<feature type="DNA-binding region" description="HMG box 1" evidence="5">
    <location>
        <begin position="9"/>
        <end position="79"/>
    </location>
</feature>
<feature type="DNA-binding region" description="HMG box 2" evidence="5">
    <location>
        <begin position="95"/>
        <end position="163"/>
    </location>
</feature>
<feature type="region of interest" description="Sufficient for interaction with HAVCR2" evidence="32">
    <location>
        <begin position="1"/>
        <end position="97"/>
    </location>
</feature>
<feature type="region of interest" description="LPS binding (delipidated)" evidence="1">
    <location>
        <begin position="3"/>
        <end position="15"/>
    </location>
</feature>
<feature type="region of interest" description="NLS 1" evidence="4">
    <location>
        <begin position="27"/>
        <end position="43"/>
    </location>
</feature>
<feature type="region of interest" description="Disordered" evidence="6">
    <location>
        <begin position="76"/>
        <end position="95"/>
    </location>
</feature>
<feature type="region of interest" description="LPS binding (Lipid A)" evidence="1">
    <location>
        <begin position="80"/>
        <end position="96"/>
    </location>
</feature>
<feature type="region of interest" description="Cytokine-stimulating activity" evidence="1">
    <location>
        <begin position="89"/>
        <end position="108"/>
    </location>
</feature>
<feature type="region of interest" description="Binding to AGER/RAGE" evidence="4">
    <location>
        <begin position="150"/>
        <end position="183"/>
    </location>
</feature>
<feature type="region of interest" description="Disordered" evidence="6">
    <location>
        <begin position="161"/>
        <end position="215"/>
    </location>
</feature>
<feature type="region of interest" description="NLS 2" evidence="4">
    <location>
        <begin position="178"/>
        <end position="184"/>
    </location>
</feature>
<feature type="short sequence motif" description="Nuclear localization signal (NLS) 1" evidence="4">
    <location>
        <begin position="27"/>
        <end position="43"/>
    </location>
</feature>
<feature type="short sequence motif" description="Nuclear localization signal (NLS) 2" evidence="4">
    <location>
        <begin position="178"/>
        <end position="184"/>
    </location>
</feature>
<feature type="compositionally biased region" description="Basic and acidic residues" evidence="6">
    <location>
        <begin position="83"/>
        <end position="94"/>
    </location>
</feature>
<feature type="compositionally biased region" description="Basic and acidic residues" evidence="6">
    <location>
        <begin position="161"/>
        <end position="179"/>
    </location>
</feature>
<feature type="compositionally biased region" description="Acidic residues" evidence="6">
    <location>
        <begin position="187"/>
        <end position="215"/>
    </location>
</feature>
<feature type="binding site" evidence="2">
    <location>
        <begin position="1"/>
        <end position="10"/>
    </location>
    <ligand>
        <name>heparin</name>
        <dbReference type="ChEBI" id="CHEBI:28304"/>
    </ligand>
</feature>
<feature type="site" description="Cleavage; by thrombin:thrombomodulin" evidence="2">
    <location>
        <begin position="10"/>
        <end position="11"/>
    </location>
</feature>
<feature type="site" description="Cleavage; by CASP1" evidence="1">
    <location>
        <begin position="67"/>
        <end position="68"/>
    </location>
</feature>
<feature type="modified residue" description="N6-acetyllysine" evidence="2">
    <location>
        <position position="3"/>
    </location>
</feature>
<feature type="modified residue" description="N6-acetyllysine" evidence="2">
    <location>
        <position position="7"/>
    </location>
</feature>
<feature type="modified residue" description="N6-acetyllysine" evidence="2">
    <location>
        <position position="8"/>
    </location>
</feature>
<feature type="modified residue" description="N6-acetyllysine" evidence="2">
    <location>
        <position position="12"/>
    </location>
</feature>
<feature type="modified residue" description="Cysteine sulfonic acid (-SO3H); alternate" evidence="4">
    <location>
        <position position="23"/>
    </location>
</feature>
<feature type="modified residue" description="N6-acetyllysine" evidence="2">
    <location>
        <position position="28"/>
    </location>
</feature>
<feature type="modified residue" description="N6-acetyllysine" evidence="2">
    <location>
        <position position="29"/>
    </location>
</feature>
<feature type="modified residue" description="N6-acetyllysine" evidence="50">
    <location>
        <position position="30"/>
    </location>
</feature>
<feature type="modified residue" description="Phosphoserine" evidence="1">
    <location>
        <position position="35"/>
    </location>
</feature>
<feature type="modified residue" description="N6-acetyllysine" evidence="50">
    <location>
        <position position="43"/>
    </location>
</feature>
<feature type="modified residue" description="Cysteine sulfonic acid (-SO3H); alternate" evidence="4">
    <location>
        <position position="45"/>
    </location>
</feature>
<feature type="modified residue" description="N6-acetyllysine" evidence="50">
    <location>
        <position position="90"/>
    </location>
</feature>
<feature type="modified residue" description="Phosphoserine" evidence="1">
    <location>
        <position position="100"/>
    </location>
</feature>
<feature type="modified residue" description="Cysteine sulfonic acid (-SO3H)" evidence="4">
    <location>
        <position position="106"/>
    </location>
</feature>
<feature type="modified residue" description="N6-acetyllysine" evidence="2">
    <location>
        <position position="127"/>
    </location>
</feature>
<feature type="modified residue" description="N6-acetyllysine" evidence="2">
    <location>
        <position position="128"/>
    </location>
</feature>
<feature type="modified residue" description="N6-acetyllysine" evidence="50">
    <location>
        <position position="141"/>
    </location>
</feature>
<feature type="modified residue" description="N6-acetyllysine" evidence="2">
    <location>
        <position position="172"/>
    </location>
</feature>
<feature type="modified residue" description="N6-acetyllysine" evidence="2">
    <location>
        <position position="173"/>
    </location>
</feature>
<feature type="modified residue" description="N6-acetyllysine" evidence="2">
    <location>
        <position position="177"/>
    </location>
</feature>
<feature type="modified residue" description="N6-acetyllysine" evidence="2">
    <location>
        <position position="180"/>
    </location>
</feature>
<feature type="modified residue" description="ADP-ribosylserine" evidence="1">
    <location>
        <position position="181"/>
    </location>
</feature>
<feature type="modified residue" description="N6-acetyllysine" evidence="2">
    <location>
        <position position="182"/>
    </location>
</feature>
<feature type="modified residue" description="N6-acetyllysine" evidence="2">
    <location>
        <position position="183"/>
    </location>
</feature>
<feature type="modified residue" description="N6-acetyllysine" evidence="2">
    <location>
        <position position="184"/>
    </location>
</feature>
<feature type="modified residue" description="N6-acetyllysine" evidence="2">
    <location>
        <position position="185"/>
    </location>
</feature>
<feature type="disulfide bond" description="In disulfide HMGB1; alternate" evidence="4">
    <location>
        <begin position="23"/>
        <end position="45"/>
    </location>
</feature>
<feature type="cross-link" description="Isoglutamyl lysine isopeptide (Lys-Gln) (interchain with Q-?)" evidence="1">
    <location>
        <position position="28"/>
    </location>
</feature>
<feature type="cross-link" description="Isoglutamyl lysine isopeptide (Lys-Gln) (interchain with Q-?)" evidence="1">
    <location>
        <position position="43"/>
    </location>
</feature>
<feature type="cross-link" description="Isoglutamyl lysine isopeptide (Lys-Gln) (interchain with Q-?)" evidence="1">
    <location>
        <position position="44"/>
    </location>
</feature>
<feature type="cross-link" description="Isoglutamyl lysine isopeptide (Lys-Gln) (interchain with Q-?)" evidence="1">
    <location>
        <position position="68"/>
    </location>
</feature>
<feature type="cross-link" description="Isoglutamyl lysine isopeptide (Lys-Gln) (interchain with Q-?)" evidence="1">
    <location>
        <position position="180"/>
    </location>
</feature>
<feature type="cross-link" description="Isoglutamyl lysine isopeptide (Lys-Gln) (interchain with Q-?)" evidence="1">
    <location>
        <position position="182"/>
    </location>
</feature>
<feature type="cross-link" description="Isoglutamyl lysine isopeptide (Lys-Gln) (interchain with Q-?)" evidence="1">
    <location>
        <position position="183"/>
    </location>
</feature>
<feature type="cross-link" description="Isoglutamyl lysine isopeptide (Lys-Gln) (interchain with Q-?)" evidence="1">
    <location>
        <position position="184"/>
    </location>
</feature>
<feature type="sequence conflict" description="In Ref. 4; AAA57042." evidence="41" ref="4">
    <original>E</original>
    <variation>V</variation>
    <location>
        <position position="179"/>
    </location>
</feature>
<feature type="sequence conflict" description="In Ref. 2; CAA56631." evidence="41" ref="2">
    <original>D</original>
    <variation>E</variation>
    <location>
        <position position="190"/>
    </location>
</feature>
<feature type="helix" evidence="51">
    <location>
        <begin position="15"/>
        <end position="30"/>
    </location>
</feature>
<feature type="helix" evidence="51">
    <location>
        <begin position="38"/>
        <end position="49"/>
    </location>
</feature>
<feature type="helix" evidence="51">
    <location>
        <begin position="58"/>
        <end position="75"/>
    </location>
</feature>
<feature type="helix" evidence="51">
    <location>
        <begin position="101"/>
        <end position="115"/>
    </location>
</feature>
<feature type="helix" evidence="51">
    <location>
        <begin position="123"/>
        <end position="135"/>
    </location>
</feature>
<feature type="helix" evidence="51">
    <location>
        <begin position="142"/>
        <end position="156"/>
    </location>
</feature>